<organism>
    <name type="scientific">Rattus norvegicus</name>
    <name type="common">Rat</name>
    <dbReference type="NCBI Taxonomy" id="10116"/>
    <lineage>
        <taxon>Eukaryota</taxon>
        <taxon>Metazoa</taxon>
        <taxon>Chordata</taxon>
        <taxon>Craniata</taxon>
        <taxon>Vertebrata</taxon>
        <taxon>Euteleostomi</taxon>
        <taxon>Mammalia</taxon>
        <taxon>Eutheria</taxon>
        <taxon>Euarchontoglires</taxon>
        <taxon>Glires</taxon>
        <taxon>Rodentia</taxon>
        <taxon>Myomorpha</taxon>
        <taxon>Muroidea</taxon>
        <taxon>Muridae</taxon>
        <taxon>Murinae</taxon>
        <taxon>Rattus</taxon>
    </lineage>
</organism>
<sequence>QPPGGSKVILF</sequence>
<name>MORN_RAT</name>
<reference key="1">
    <citation type="journal article" date="1981" name="Nature">
        <title>Conserved amino acid sequence of a neuropeptide, the head activator, from coelenterates to humans.</title>
        <authorList>
            <person name="Bodenmuller H."/>
            <person name="Schaller H.C."/>
        </authorList>
    </citation>
    <scope>PROTEIN SEQUENCE</scope>
    <scope>PYROGLUTAMATE FORMATION AT GLN-1</scope>
</reference>
<reference key="2">
    <citation type="journal article" date="1981" name="FEBS Lett.">
        <title>Synthesis of a new neuropeptide, the head activator from hydra.</title>
        <authorList>
            <person name="Birr C."/>
            <person name="Zachmann B."/>
            <person name="Bodenmuller H."/>
            <person name="Schaller H.C."/>
        </authorList>
    </citation>
    <scope>SYNTHESIS</scope>
</reference>
<reference key="3">
    <citation type="journal article" date="1989" name="EMBO J.">
        <title>Head activator acts as an autocrine growth factor for NH15-CA2 cells in the G2/mitosis transition.</title>
        <authorList>
            <person name="Schaller H.C."/>
            <person name="Druffel-Augustin S."/>
            <person name="Dubel S."/>
        </authorList>
    </citation>
    <scope>FUNCTION</scope>
</reference>
<feature type="peptide" id="PRO_0000044169" description="Morphogenetic neuropeptide">
    <location>
        <begin position="1"/>
        <end position="11"/>
    </location>
</feature>
<feature type="modified residue" description="Pyrrolidone carboxylic acid" evidence="3">
    <location>
        <position position="1"/>
    </location>
</feature>
<comment type="function">
    <text evidence="2">Stimulates the proliferation of neural cells.</text>
</comment>
<comment type="subunit">
    <text evidence="1">May interact with SORL1 (via N-terminal ectodomain); this interaction is impaired in the presence of SORL1 propeptide.</text>
</comment>
<comment type="caution">
    <text evidence="4">This peptide was first isolated from nerve cells of hydra and was called head activator by the authors, because it induced head-specific growth and differentiation in this animal. It has been found in mammalian intestine and hypothalamus.</text>
</comment>
<protein>
    <recommendedName>
        <fullName>Morphogenetic neuropeptide</fullName>
    </recommendedName>
    <alternativeName>
        <fullName>Head activator</fullName>
        <shortName>HA</shortName>
    </alternativeName>
</protein>
<evidence type="ECO:0000250" key="1">
    <source>
        <dbReference type="UniProtKB" id="P69208"/>
    </source>
</evidence>
<evidence type="ECO:0000269" key="2">
    <source>
    </source>
</evidence>
<evidence type="ECO:0000269" key="3">
    <source>
    </source>
</evidence>
<evidence type="ECO:0000305" key="4"/>
<keyword id="KW-0131">Cell cycle</keyword>
<keyword id="KW-0132">Cell division</keyword>
<keyword id="KW-0903">Direct protein sequencing</keyword>
<keyword id="KW-0339">Growth factor</keyword>
<keyword id="KW-0498">Mitosis</keyword>
<keyword id="KW-0873">Pyrrolidone carboxylic acid</keyword>
<keyword id="KW-1185">Reference proteome</keyword>
<dbReference type="PIR" id="A01427">
    <property type="entry name" value="YHRT"/>
</dbReference>
<dbReference type="InParanoid" id="P69209"/>
<dbReference type="Proteomes" id="UP000002494">
    <property type="component" value="Unplaced"/>
</dbReference>
<dbReference type="GO" id="GO:0008083">
    <property type="term" value="F:growth factor activity"/>
    <property type="evidence" value="ECO:0007669"/>
    <property type="project" value="UniProtKB-KW"/>
</dbReference>
<dbReference type="GO" id="GO:0051301">
    <property type="term" value="P:cell division"/>
    <property type="evidence" value="ECO:0007669"/>
    <property type="project" value="UniProtKB-KW"/>
</dbReference>
<proteinExistence type="evidence at protein level"/>
<accession>P69209</accession>
<accession>P01163</accession>